<proteinExistence type="evidence at protein level"/>
<dbReference type="PIR" id="S00800">
    <property type="entry name" value="LBERBC"/>
</dbReference>
<dbReference type="SMR" id="P11696"/>
<dbReference type="GO" id="GO:0005886">
    <property type="term" value="C:plasma membrane"/>
    <property type="evidence" value="ECO:0007669"/>
    <property type="project" value="UniProtKB-SubCell"/>
</dbReference>
<dbReference type="GO" id="GO:0030077">
    <property type="term" value="C:plasma membrane light-harvesting complex"/>
    <property type="evidence" value="ECO:0007669"/>
    <property type="project" value="InterPro"/>
</dbReference>
<dbReference type="GO" id="GO:0042314">
    <property type="term" value="F:bacteriochlorophyll binding"/>
    <property type="evidence" value="ECO:0007669"/>
    <property type="project" value="UniProtKB-KW"/>
</dbReference>
<dbReference type="GO" id="GO:0045156">
    <property type="term" value="F:electron transporter, transferring electrons within the cyclic electron transport pathway of photosynthesis activity"/>
    <property type="evidence" value="ECO:0007669"/>
    <property type="project" value="InterPro"/>
</dbReference>
<dbReference type="GO" id="GO:0046872">
    <property type="term" value="F:metal ion binding"/>
    <property type="evidence" value="ECO:0007669"/>
    <property type="project" value="UniProtKB-KW"/>
</dbReference>
<dbReference type="GO" id="GO:0019684">
    <property type="term" value="P:photosynthesis, light reaction"/>
    <property type="evidence" value="ECO:0007669"/>
    <property type="project" value="InterPro"/>
</dbReference>
<dbReference type="Gene3D" id="1.20.5.250">
    <property type="match status" value="1"/>
</dbReference>
<dbReference type="InterPro" id="IPR023624">
    <property type="entry name" value="Antenna_beta_dom_sf"/>
</dbReference>
<dbReference type="InterPro" id="IPR002362">
    <property type="entry name" value="LHB-1/5"/>
</dbReference>
<dbReference type="InterPro" id="IPR035889">
    <property type="entry name" value="Light-harvesting_complex"/>
</dbReference>
<dbReference type="PRINTS" id="PR00674">
    <property type="entry name" value="LIGHTHARVSTB"/>
</dbReference>
<dbReference type="SUPFAM" id="SSF56918">
    <property type="entry name" value="Light-harvesting complex subunits"/>
    <property type="match status" value="1"/>
</dbReference>
<comment type="function">
    <text>Antenna complexes are light-harvesting systems, which transfer the excitation energy to the reaction centers.</text>
</comment>
<comment type="subunit">
    <text>The core complex is formed by different alpha and beta chains, binding bacteriochlorophyll molecules, and arranged most probably in tetrameric structures disposed around the reaction center. The non-pigmented gamma chains may constitute additional components.</text>
</comment>
<comment type="subcellular location">
    <subcellularLocation>
        <location>Cell inner membrane</location>
        <topology>Single-pass type II membrane protein</topology>
    </subcellularLocation>
</comment>
<comment type="similarity">
    <text evidence="2">Belongs to the antenna complex beta subunit family.</text>
</comment>
<keyword id="KW-0042">Antenna complex</keyword>
<keyword id="KW-0076">Bacteriochlorophyll</keyword>
<keyword id="KW-0997">Cell inner membrane</keyword>
<keyword id="KW-1003">Cell membrane</keyword>
<keyword id="KW-0148">Chlorophyll</keyword>
<keyword id="KW-0157">Chromophore</keyword>
<keyword id="KW-0903">Direct protein sequencing</keyword>
<keyword id="KW-0437">Light-harvesting polypeptide</keyword>
<keyword id="KW-0460">Magnesium</keyword>
<keyword id="KW-0472">Membrane</keyword>
<keyword id="KW-0479">Metal-binding</keyword>
<keyword id="KW-0812">Transmembrane</keyword>
<keyword id="KW-1133">Transmembrane helix</keyword>
<feature type="chain" id="PRO_0000099813" description="Light-harvesting protein B800/830/1020 beta-2 chain">
    <location>
        <begin position="1"/>
        <end position="65"/>
    </location>
</feature>
<feature type="topological domain" description="Cytoplasmic" evidence="1">
    <location>
        <begin position="1"/>
        <end position="17"/>
    </location>
</feature>
<feature type="transmembrane region" description="Helical" evidence="1">
    <location>
        <begin position="18"/>
        <end position="40"/>
    </location>
</feature>
<feature type="topological domain" description="Periplasmic" evidence="1">
    <location>
        <begin position="41"/>
        <end position="65"/>
    </location>
</feature>
<feature type="binding site" description="axial binding residue" evidence="1">
    <location>
        <position position="16"/>
    </location>
    <ligand>
        <name>a bacteriochlorophyll</name>
        <dbReference type="ChEBI" id="CHEBI:38201"/>
    </ligand>
    <ligandPart>
        <name>Mg</name>
        <dbReference type="ChEBI" id="CHEBI:25107"/>
    </ligandPart>
</feature>
<feature type="binding site" description="axial binding residue" evidence="1">
    <location>
        <position position="34"/>
    </location>
    <ligand>
        <name>a bacteriochlorophyll</name>
        <dbReference type="ChEBI" id="CHEBI:38201"/>
    </ligand>
    <ligandPart>
        <name>Mg</name>
        <dbReference type="ChEBI" id="CHEBI:25107"/>
    </ligandPart>
</feature>
<evidence type="ECO:0000255" key="1"/>
<evidence type="ECO:0000305" key="2"/>
<accession>P11696</accession>
<name>LHB2_HALHR</name>
<sequence>TDIRTGLTDEECQEIHEMNMLGMHAYWSIGLIANALAYAWRPFHQGRAGNRLEDHAPDYVRSALT</sequence>
<reference key="1">
    <citation type="journal article" date="1992" name="Eur. J. Biochem.">
        <title>The primary structure of the antenna polypeptides of Ectothiorhodospira halochloris and Ectothiorhodospira halophila. Four core-type antenna polypeptides in E. halochloris and E. halophila.</title>
        <authorList>
            <person name="Wagner-Huber R."/>
            <person name="Brunisholz R.A."/>
            <person name="Bissig I."/>
            <person name="Frank G."/>
            <person name="Suter F."/>
            <person name="Zuber H."/>
        </authorList>
    </citation>
    <scope>PROTEIN SEQUENCE</scope>
    <source>
        <strain>ATCC 35916 / DSM 1059 / BN 9850 / A</strain>
    </source>
</reference>
<reference key="2">
    <citation type="journal article" date="1988" name="FEBS Lett.">
        <title>A new possible binding site for bacteriochlorophyll b in a light-harvesting polypeptide of the bacterium Ectothiorhodospira halochloris.</title>
        <authorList>
            <person name="Wagner-Huber R."/>
            <person name="Brunisholz R.A."/>
            <person name="Bissig I."/>
            <person name="Frank G."/>
            <person name="Zuber H."/>
        </authorList>
    </citation>
    <scope>PROTEIN SEQUENCE</scope>
</reference>
<organism>
    <name type="scientific">Halorhodospira halochloris</name>
    <name type="common">Ectothiorhodospira halochloris</name>
    <dbReference type="NCBI Taxonomy" id="1052"/>
    <lineage>
        <taxon>Bacteria</taxon>
        <taxon>Pseudomonadati</taxon>
        <taxon>Pseudomonadota</taxon>
        <taxon>Gammaproteobacteria</taxon>
        <taxon>Chromatiales</taxon>
        <taxon>Ectothiorhodospiraceae</taxon>
        <taxon>Halorhodospira</taxon>
    </lineage>
</organism>
<protein>
    <recommendedName>
        <fullName>Light-harvesting protein B800/830/1020 beta-2 chain</fullName>
    </recommendedName>
    <alternativeName>
        <fullName>Antenna pigment protein beta-2 chain</fullName>
    </alternativeName>
    <alternativeName>
        <fullName>EHS-beta-2</fullName>
    </alternativeName>
</protein>